<accession>B4TC11</accession>
<organism>
    <name type="scientific">Salmonella heidelberg (strain SL476)</name>
    <dbReference type="NCBI Taxonomy" id="454169"/>
    <lineage>
        <taxon>Bacteria</taxon>
        <taxon>Pseudomonadati</taxon>
        <taxon>Pseudomonadota</taxon>
        <taxon>Gammaproteobacteria</taxon>
        <taxon>Enterobacterales</taxon>
        <taxon>Enterobacteriaceae</taxon>
        <taxon>Salmonella</taxon>
    </lineage>
</organism>
<reference key="1">
    <citation type="journal article" date="2011" name="J. Bacteriol.">
        <title>Comparative genomics of 28 Salmonella enterica isolates: evidence for CRISPR-mediated adaptive sublineage evolution.</title>
        <authorList>
            <person name="Fricke W.F."/>
            <person name="Mammel M.K."/>
            <person name="McDermott P.F."/>
            <person name="Tartera C."/>
            <person name="White D.G."/>
            <person name="Leclerc J.E."/>
            <person name="Ravel J."/>
            <person name="Cebula T.A."/>
        </authorList>
    </citation>
    <scope>NUCLEOTIDE SEQUENCE [LARGE SCALE GENOMIC DNA]</scope>
    <source>
        <strain>SL476</strain>
    </source>
</reference>
<feature type="chain" id="PRO_1000129425" description="Quinolinate synthase">
    <location>
        <begin position="1"/>
        <end position="347"/>
    </location>
</feature>
<feature type="binding site" evidence="1">
    <location>
        <position position="47"/>
    </location>
    <ligand>
        <name>iminosuccinate</name>
        <dbReference type="ChEBI" id="CHEBI:77875"/>
    </ligand>
</feature>
<feature type="binding site" evidence="1">
    <location>
        <position position="68"/>
    </location>
    <ligand>
        <name>iminosuccinate</name>
        <dbReference type="ChEBI" id="CHEBI:77875"/>
    </ligand>
</feature>
<feature type="binding site" evidence="1">
    <location>
        <position position="113"/>
    </location>
    <ligand>
        <name>[4Fe-4S] cluster</name>
        <dbReference type="ChEBI" id="CHEBI:49883"/>
    </ligand>
</feature>
<feature type="binding site" evidence="1">
    <location>
        <begin position="139"/>
        <end position="141"/>
    </location>
    <ligand>
        <name>iminosuccinate</name>
        <dbReference type="ChEBI" id="CHEBI:77875"/>
    </ligand>
</feature>
<feature type="binding site" evidence="1">
    <location>
        <position position="156"/>
    </location>
    <ligand>
        <name>iminosuccinate</name>
        <dbReference type="ChEBI" id="CHEBI:77875"/>
    </ligand>
</feature>
<feature type="binding site" evidence="1">
    <location>
        <position position="200"/>
    </location>
    <ligand>
        <name>[4Fe-4S] cluster</name>
        <dbReference type="ChEBI" id="CHEBI:49883"/>
    </ligand>
</feature>
<feature type="binding site" evidence="1">
    <location>
        <begin position="226"/>
        <end position="228"/>
    </location>
    <ligand>
        <name>iminosuccinate</name>
        <dbReference type="ChEBI" id="CHEBI:77875"/>
    </ligand>
</feature>
<feature type="binding site" evidence="1">
    <location>
        <position position="243"/>
    </location>
    <ligand>
        <name>iminosuccinate</name>
        <dbReference type="ChEBI" id="CHEBI:77875"/>
    </ligand>
</feature>
<feature type="binding site" evidence="1">
    <location>
        <position position="297"/>
    </location>
    <ligand>
        <name>[4Fe-4S] cluster</name>
        <dbReference type="ChEBI" id="CHEBI:49883"/>
    </ligand>
</feature>
<sequence>MSVMFDPQAAIYPFPPKPTPLNDDEKQFYREKIKRLLKERNAVMVAHYYTDPEIQQLAEETGGCISDSLEMARFGTKHAASTLLVAGVRFMGETAKILSPEKTILMPTLAAECSLDLGCPIDEFSAFCDAHPDRTVVVYANTSAAVKARADWVVTSSIAVELIEHLDSLGEKIIWAPDRHLGNYVQKQTGADVLCWQGACIVHDEFKTQALTRLKKIYPDAALLVHPESPQSIVEMADAVGSTSQLIKAAKTLPHRQLIVATDRGIFYKMQQAVPEKELLEAPTAGEGATCRSCAHCPWMAMNGLKAIAEGLEQGGAAHEIQVDAALREGALLPLNRMLDFAATLRA</sequence>
<gene>
    <name evidence="1" type="primary">nadA</name>
    <name type="ordered locus">SeHA_C0883</name>
</gene>
<comment type="function">
    <text evidence="1">Catalyzes the condensation of iminoaspartate with dihydroxyacetone phosphate to form quinolinate.</text>
</comment>
<comment type="catalytic activity">
    <reaction evidence="1">
        <text>iminosuccinate + dihydroxyacetone phosphate = quinolinate + phosphate + 2 H2O + H(+)</text>
        <dbReference type="Rhea" id="RHEA:25888"/>
        <dbReference type="ChEBI" id="CHEBI:15377"/>
        <dbReference type="ChEBI" id="CHEBI:15378"/>
        <dbReference type="ChEBI" id="CHEBI:29959"/>
        <dbReference type="ChEBI" id="CHEBI:43474"/>
        <dbReference type="ChEBI" id="CHEBI:57642"/>
        <dbReference type="ChEBI" id="CHEBI:77875"/>
        <dbReference type="EC" id="2.5.1.72"/>
    </reaction>
    <physiologicalReaction direction="left-to-right" evidence="1">
        <dbReference type="Rhea" id="RHEA:25889"/>
    </physiologicalReaction>
</comment>
<comment type="cofactor">
    <cofactor evidence="1">
        <name>[4Fe-4S] cluster</name>
        <dbReference type="ChEBI" id="CHEBI:49883"/>
    </cofactor>
    <text evidence="1">Binds 1 [4Fe-4S] cluster per subunit.</text>
</comment>
<comment type="pathway">
    <text evidence="1">Cofactor biosynthesis; NAD(+) biosynthesis; quinolinate from iminoaspartate: step 1/1.</text>
</comment>
<comment type="subcellular location">
    <subcellularLocation>
        <location evidence="1">Cytoplasm</location>
    </subcellularLocation>
</comment>
<comment type="similarity">
    <text evidence="1">Belongs to the quinolinate synthase family. Type 1 subfamily.</text>
</comment>
<keyword id="KW-0004">4Fe-4S</keyword>
<keyword id="KW-0963">Cytoplasm</keyword>
<keyword id="KW-0408">Iron</keyword>
<keyword id="KW-0411">Iron-sulfur</keyword>
<keyword id="KW-0479">Metal-binding</keyword>
<keyword id="KW-0662">Pyridine nucleotide biosynthesis</keyword>
<keyword id="KW-0808">Transferase</keyword>
<dbReference type="EC" id="2.5.1.72" evidence="1"/>
<dbReference type="EMBL" id="CP001120">
    <property type="protein sequence ID" value="ACF66164.1"/>
    <property type="molecule type" value="Genomic_DNA"/>
</dbReference>
<dbReference type="RefSeq" id="WP_000115347.1">
    <property type="nucleotide sequence ID" value="NC_011083.1"/>
</dbReference>
<dbReference type="SMR" id="B4TC11"/>
<dbReference type="KEGG" id="seh:SeHA_C0883"/>
<dbReference type="HOGENOM" id="CLU_047382_1_0_6"/>
<dbReference type="UniPathway" id="UPA00253">
    <property type="reaction ID" value="UER00327"/>
</dbReference>
<dbReference type="Proteomes" id="UP000001866">
    <property type="component" value="Chromosome"/>
</dbReference>
<dbReference type="GO" id="GO:0005829">
    <property type="term" value="C:cytosol"/>
    <property type="evidence" value="ECO:0007669"/>
    <property type="project" value="TreeGrafter"/>
</dbReference>
<dbReference type="GO" id="GO:0051539">
    <property type="term" value="F:4 iron, 4 sulfur cluster binding"/>
    <property type="evidence" value="ECO:0007669"/>
    <property type="project" value="UniProtKB-KW"/>
</dbReference>
<dbReference type="GO" id="GO:0046872">
    <property type="term" value="F:metal ion binding"/>
    <property type="evidence" value="ECO:0007669"/>
    <property type="project" value="UniProtKB-KW"/>
</dbReference>
<dbReference type="GO" id="GO:0008987">
    <property type="term" value="F:quinolinate synthetase A activity"/>
    <property type="evidence" value="ECO:0007669"/>
    <property type="project" value="UniProtKB-UniRule"/>
</dbReference>
<dbReference type="GO" id="GO:0034628">
    <property type="term" value="P:'de novo' NAD biosynthetic process from L-aspartate"/>
    <property type="evidence" value="ECO:0007669"/>
    <property type="project" value="TreeGrafter"/>
</dbReference>
<dbReference type="FunFam" id="3.40.50.10800:FF:000003">
    <property type="entry name" value="Quinolinate synthase A"/>
    <property type="match status" value="1"/>
</dbReference>
<dbReference type="Gene3D" id="3.40.50.10800">
    <property type="entry name" value="NadA-like"/>
    <property type="match status" value="3"/>
</dbReference>
<dbReference type="HAMAP" id="MF_00567">
    <property type="entry name" value="NadA_type1"/>
    <property type="match status" value="1"/>
</dbReference>
<dbReference type="InterPro" id="IPR003473">
    <property type="entry name" value="NadA"/>
</dbReference>
<dbReference type="InterPro" id="IPR036094">
    <property type="entry name" value="NadA_sf"/>
</dbReference>
<dbReference type="InterPro" id="IPR023513">
    <property type="entry name" value="Quinolinate_synth_A_type1"/>
</dbReference>
<dbReference type="NCBIfam" id="TIGR00550">
    <property type="entry name" value="nadA"/>
    <property type="match status" value="1"/>
</dbReference>
<dbReference type="NCBIfam" id="NF006877">
    <property type="entry name" value="PRK09375.1-1"/>
    <property type="match status" value="1"/>
</dbReference>
<dbReference type="NCBIfam" id="NF006878">
    <property type="entry name" value="PRK09375.1-2"/>
    <property type="match status" value="1"/>
</dbReference>
<dbReference type="PANTHER" id="PTHR30573:SF0">
    <property type="entry name" value="QUINOLINATE SYNTHASE, CHLOROPLASTIC"/>
    <property type="match status" value="1"/>
</dbReference>
<dbReference type="PANTHER" id="PTHR30573">
    <property type="entry name" value="QUINOLINATE SYNTHETASE A"/>
    <property type="match status" value="1"/>
</dbReference>
<dbReference type="Pfam" id="PF02445">
    <property type="entry name" value="NadA"/>
    <property type="match status" value="1"/>
</dbReference>
<dbReference type="SUPFAM" id="SSF142754">
    <property type="entry name" value="NadA-like"/>
    <property type="match status" value="1"/>
</dbReference>
<protein>
    <recommendedName>
        <fullName evidence="1">Quinolinate synthase</fullName>
        <ecNumber evidence="1">2.5.1.72</ecNumber>
    </recommendedName>
</protein>
<name>NADA_SALHS</name>
<evidence type="ECO:0000255" key="1">
    <source>
        <dbReference type="HAMAP-Rule" id="MF_00567"/>
    </source>
</evidence>
<proteinExistence type="inferred from homology"/>